<keyword id="KW-0150">Chloroplast</keyword>
<keyword id="KW-0472">Membrane</keyword>
<keyword id="KW-0934">Plastid</keyword>
<keyword id="KW-1001">Plastid inner membrane</keyword>
<keyword id="KW-0653">Protein transport</keyword>
<keyword id="KW-0812">Transmembrane</keyword>
<keyword id="KW-1133">Transmembrane helix</keyword>
<keyword id="KW-0813">Transport</keyword>
<geneLocation type="chloroplast"/>
<dbReference type="EMBL" id="DQ864733">
    <property type="protein sequence ID" value="ABI49067.1"/>
    <property type="molecule type" value="Genomic_DNA"/>
</dbReference>
<dbReference type="EMBL" id="DQ864733">
    <property type="protein sequence ID" value="ABI49079.1"/>
    <property type="molecule type" value="Genomic_DNA"/>
</dbReference>
<dbReference type="KEGG" id="cit:4271109"/>
<dbReference type="KEGG" id="cit:4271147"/>
<dbReference type="OrthoDB" id="281491at71240"/>
<dbReference type="GO" id="GO:0009706">
    <property type="term" value="C:chloroplast inner membrane"/>
    <property type="evidence" value="ECO:0007669"/>
    <property type="project" value="UniProtKB-SubCell"/>
</dbReference>
<dbReference type="GO" id="GO:0015031">
    <property type="term" value="P:protein transport"/>
    <property type="evidence" value="ECO:0007669"/>
    <property type="project" value="UniProtKB-KW"/>
</dbReference>
<dbReference type="InterPro" id="IPR008896">
    <property type="entry name" value="TIC214"/>
</dbReference>
<dbReference type="PANTHER" id="PTHR33163:SF40">
    <property type="entry name" value="PROTEIN TIC 214"/>
    <property type="match status" value="1"/>
</dbReference>
<dbReference type="PANTHER" id="PTHR33163">
    <property type="entry name" value="PROTEIN TIC 214-RELATED"/>
    <property type="match status" value="1"/>
</dbReference>
<dbReference type="Pfam" id="PF05758">
    <property type="entry name" value="Ycf1"/>
    <property type="match status" value="1"/>
</dbReference>
<name>TI214_CITSI</name>
<reference key="1">
    <citation type="journal article" date="2006" name="BMC Plant Biol.">
        <title>The complete chloroplast genome sequence of Citrus sinensis (L.) Osbeck var 'Ridge Pineapple': organization and phylogenetic relationships to other angiosperms.</title>
        <authorList>
            <person name="Bausher M.G."/>
            <person name="Singh N.D."/>
            <person name="Lee S.-B."/>
            <person name="Jansen R.K."/>
            <person name="Daniell H."/>
        </authorList>
    </citation>
    <scope>NUCLEOTIDE SEQUENCE [LARGE SCALE GENOMIC DNA]</scope>
    <source>
        <strain>cv. Osbeck var. Ridge Pineapple</strain>
    </source>
</reference>
<feature type="chain" id="PRO_0000262604" description="Protein TIC 214">
    <location>
        <begin position="1"/>
        <end position="1829"/>
    </location>
</feature>
<feature type="transmembrane region" description="Helical" evidence="2">
    <location>
        <begin position="18"/>
        <end position="38"/>
    </location>
</feature>
<feature type="transmembrane region" description="Helical" evidence="2">
    <location>
        <begin position="67"/>
        <end position="87"/>
    </location>
</feature>
<feature type="transmembrane region" description="Helical" evidence="2">
    <location>
        <begin position="90"/>
        <end position="110"/>
    </location>
</feature>
<feature type="transmembrane region" description="Helical" evidence="2">
    <location>
        <begin position="127"/>
        <end position="147"/>
    </location>
</feature>
<feature type="transmembrane region" description="Helical" evidence="2">
    <location>
        <begin position="174"/>
        <end position="194"/>
    </location>
</feature>
<feature type="transmembrane region" description="Helical" evidence="2">
    <location>
        <begin position="224"/>
        <end position="244"/>
    </location>
</feature>
<feature type="region of interest" description="Disordered" evidence="3">
    <location>
        <begin position="260"/>
        <end position="301"/>
    </location>
</feature>
<feature type="compositionally biased region" description="Basic and acidic residues" evidence="3">
    <location>
        <begin position="260"/>
        <end position="272"/>
    </location>
</feature>
<proteinExistence type="inferred from homology"/>
<organism>
    <name type="scientific">Citrus sinensis</name>
    <name type="common">Sweet orange</name>
    <name type="synonym">Citrus aurantium var. sinensis</name>
    <dbReference type="NCBI Taxonomy" id="2711"/>
    <lineage>
        <taxon>Eukaryota</taxon>
        <taxon>Viridiplantae</taxon>
        <taxon>Streptophyta</taxon>
        <taxon>Embryophyta</taxon>
        <taxon>Tracheophyta</taxon>
        <taxon>Spermatophyta</taxon>
        <taxon>Magnoliopsida</taxon>
        <taxon>eudicotyledons</taxon>
        <taxon>Gunneridae</taxon>
        <taxon>Pentapetalae</taxon>
        <taxon>rosids</taxon>
        <taxon>malvids</taxon>
        <taxon>Sapindales</taxon>
        <taxon>Rutaceae</taxon>
        <taxon>Aurantioideae</taxon>
        <taxon>Citrus</taxon>
    </lineage>
</organism>
<protein>
    <recommendedName>
        <fullName evidence="1">Protein TIC 214</fullName>
    </recommendedName>
    <alternativeName>
        <fullName evidence="1">Translocon at the inner envelope membrane of chloroplasts 214</fullName>
        <shortName evidence="1">AtTIC214</shortName>
    </alternativeName>
</protein>
<gene>
    <name evidence="1" type="primary">TIC214</name>
    <name type="synonym">ycf1-A</name>
</gene>
<gene>
    <name evidence="1" type="primary">TIC214</name>
    <name type="synonym">ycf1-B</name>
</gene>
<evidence type="ECO:0000250" key="1">
    <source>
        <dbReference type="UniProtKB" id="P56785"/>
    </source>
</evidence>
<evidence type="ECO:0000255" key="2"/>
<evidence type="ECO:0000256" key="3">
    <source>
        <dbReference type="SAM" id="MobiDB-lite"/>
    </source>
</evidence>
<evidence type="ECO:0000305" key="4"/>
<accession>Q09MB8</accession>
<accession>Q09MD0</accession>
<sequence length="1829" mass="217535">MIFQSFILGNLVSLCMKIINSVVVVGLYYGFMTTFSIGPSYLFLLRARVMEEGEEGTEKKVSATTGFIAGQLMMFISIYYAPLHLALGRPHTITVLALPYLLFHFFWNNPKHFFDYGSTTRNSMRNLSIQCVFLNNLIFQLFNHFLLPSSMLARLVNIYMFRCNNKMLFVTSSFVGWLIGHILFMKWVGLVLVWMQQKNSIRSNVLIRFNKYLVSELRNSMARIFSILLFITCIYYLGRIPSPIFTKKLKVKETSETEERDVEIEKTFERGGTKQGQEVSAEEDPSPSLFSEEKEDPDKIEETEEIRVNGKEKKKTKHEFHLRFKETCDKNSPVYETSYLDGNQENSKFEIFQLFKEKKEEKYLLWFEKPLVTLLFDYKRWTRPLRYKKNNRFENAVRNEMSHYFFYACRSDGKERISFTYPASLSTFLDMIKKNNYFFATEKLSSDEFSTHWNYTNNQKIKNLSKEFRNRLEGLDKGSLIRDILEKRTQLCNDKTKKKYLPKTYDPLLNGPYRGRIKKFFSPPILNTTYIKNKIRTPWINKIHNLIFINDYHEFEQTIDRFNRKSFSSEEVRSLLTEREREHIDSEDRIKSLNFLFDAVITDPNDQKIRKKAIKEISKRVPRWSYKLIDNVYQELGEYDENVRGKHAFRSRKAKRLVVAVDHQTKGDVSLPHYLEQSDFRRYIIKGSMRAQRRKTVIWKPVQANAHSPLFLDRIDKTLYLSFDISQLMKVILRNWMVKNKNQKLSDYTNAKTRKLDKKEKKKLKGERYQRQEMVRIKQAEGWDKRLLTRILRSSMLVIQSILRKYIVLPLLIIAKNVVRILLFQDPEWSEDFKDWNREIYVKCTYSGVNLSETEFPKNWLIEGIQIKILFPFHLKPWHGSTIQSSHKDPKSEQETDVCFLTIFGLETDMPFGSPQKRRSFFEPIFKELKKKIRKLKTKSFIVLRDFKEGKIKELSKINLREIEKLRETQKNSIISKQMIHEPSIEISSMDWTKLSRTEKKMKDLTNRTSRIRNQIYKITKEKKKGSLTQETNISSNKPTYSVKILDPSKRIWRILKKRNARLIRKSYLFLKFGIEKIYRNIFISTLTIPRINTKPFRESTRKQMKIIEKNIHNNEANPERINKTNKNRIISTIQKLISKTSNKNSKISCNLLSFSQSQAYVFYKLLQVPILNFYNLRPVLQYHGTSLFLKNEIKDFFEKHGIFNYQLRHKPLWNFGRNTRKHCLSGHYQYDLSRIKWARLVPQEWRNRANQHCMAQNKDLIKRDSYEKNGLTHYEKQHFFEADLLRNQKSNFKKHYRYDLLSYKSLNYEDKKDSYIDRSLVQVNNKEEYYSNYNRKKVKLLAMLGSISINNYIGEDDIMDMEKFLYRKYFDWRILNFCLRNKANMEAWVDMDTGTSSNQNTRIGSNNYQKINAINNRVPFYLTIHQDEEINPSTQKGFFCDWMGMNEEILSCPISNPESWFFPEFVLLFNAYRTKPWIIPIKLLLFNFNGNSKKNRTGKKEADLFISPTQKEYFELSNQSKEENELADQGTPRSDAQKQVILGSVLSNQEKDGEENYTGSDMKTRIKKKQSKRETEVQLDFFLKRYLCLQLRWRGAVSFREKILNDMQVYCHLVRLINPSDVAIASIQRGEMSLPILITKKKFALKELTKGGMLIIEPRRLSVKNDGQFFLYQIVGIALVHKNKRKITKRYQEKGYVDKKDFDEFIAKHQKMTGNRNKNHYDLLVPETILLPKRRRELRTLICFNSKNQNGMQKNPVFFNNGKGGGRVLDKNKNLAREKNQLIQLKFFIWANSRLEDLICMNRYWFNTNNGSRFSMVRVHMYPRLKIR</sequence>
<comment type="function">
    <text evidence="1">Involved in protein precursor import into chloroplasts. May be part of an intermediate translocation complex acting as a protein-conducting channel at the inner envelope.</text>
</comment>
<comment type="subunit">
    <text evidence="1">Part of the Tic complex.</text>
</comment>
<comment type="subcellular location">
    <subcellularLocation>
        <location evidence="1">Plastid</location>
        <location evidence="1">Chloroplast inner membrane</location>
        <topology evidence="2">Multi-pass membrane protein</topology>
    </subcellularLocation>
</comment>
<comment type="miscellaneous">
    <text>There is a partial copy of the N-terminus (positions 1-363) of ycf1 in the inverted repeat (ABI49067).</text>
</comment>
<comment type="similarity">
    <text evidence="4">Belongs to the TIC214 family.</text>
</comment>